<dbReference type="EMBL" id="AL590445">
    <property type="protein sequence ID" value="CAD26541.2"/>
    <property type="molecule type" value="Genomic_DNA"/>
</dbReference>
<dbReference type="RefSeq" id="NP_597364.1">
    <property type="nucleotide sequence ID" value="NM_001041230.1"/>
</dbReference>
<dbReference type="PDB" id="7QEP">
    <property type="method" value="EM"/>
    <property type="resolution" value="2.70 A"/>
    <property type="chains" value="S1=1-239"/>
</dbReference>
<dbReference type="PDBsum" id="7QEP"/>
<dbReference type="EMDB" id="EMD-13936"/>
<dbReference type="SMR" id="Q8SS05"/>
<dbReference type="FunCoup" id="Q8SS05">
    <property type="interactions" value="218"/>
</dbReference>
<dbReference type="STRING" id="284813.Q8SS05"/>
<dbReference type="GeneID" id="859028"/>
<dbReference type="KEGG" id="ecu:ECU05_0250"/>
<dbReference type="VEuPathDB" id="MicrosporidiaDB:ECU05_0250"/>
<dbReference type="HOGENOM" id="CLU_062507_0_2_1"/>
<dbReference type="InParanoid" id="Q8SS05"/>
<dbReference type="OrthoDB" id="9834376at2759"/>
<dbReference type="Proteomes" id="UP000000819">
    <property type="component" value="Chromosome V"/>
</dbReference>
<dbReference type="GO" id="GO:0022627">
    <property type="term" value="C:cytosolic small ribosomal subunit"/>
    <property type="evidence" value="ECO:0007669"/>
    <property type="project" value="UniProtKB-UniRule"/>
</dbReference>
<dbReference type="GO" id="GO:0003735">
    <property type="term" value="F:structural constituent of ribosome"/>
    <property type="evidence" value="ECO:0007669"/>
    <property type="project" value="UniProtKB-UniRule"/>
</dbReference>
<dbReference type="GO" id="GO:0006412">
    <property type="term" value="P:translation"/>
    <property type="evidence" value="ECO:0007669"/>
    <property type="project" value="UniProtKB-UniRule"/>
</dbReference>
<dbReference type="HAMAP" id="MF_03122">
    <property type="entry name" value="Ribosomal_eS1_euk"/>
    <property type="match status" value="1"/>
</dbReference>
<dbReference type="InterPro" id="IPR001593">
    <property type="entry name" value="Ribosomal_eS1"/>
</dbReference>
<dbReference type="InterPro" id="IPR027500">
    <property type="entry name" value="Ribosomal_eS1_euk"/>
</dbReference>
<dbReference type="PANTHER" id="PTHR11830">
    <property type="entry name" value="40S RIBOSOMAL PROTEIN S3A"/>
    <property type="match status" value="1"/>
</dbReference>
<dbReference type="Pfam" id="PF01015">
    <property type="entry name" value="Ribosomal_S3Ae"/>
    <property type="match status" value="1"/>
</dbReference>
<dbReference type="SMART" id="SM01397">
    <property type="entry name" value="Ribosomal_S3Ae"/>
    <property type="match status" value="1"/>
</dbReference>
<accession>Q8SS05</accession>
<name>RS3A_ENCCU</name>
<feature type="chain" id="PRO_0000389377" description="Small ribosomal subunit protein eS1">
    <location>
        <begin position="1"/>
        <end position="239"/>
    </location>
</feature>
<feature type="region of interest" description="Disordered" evidence="2">
    <location>
        <begin position="1"/>
        <end position="24"/>
    </location>
</feature>
<evidence type="ECO:0000255" key="1">
    <source>
        <dbReference type="HAMAP-Rule" id="MF_03122"/>
    </source>
</evidence>
<evidence type="ECO:0000256" key="2">
    <source>
        <dbReference type="SAM" id="MobiDB-lite"/>
    </source>
</evidence>
<evidence type="ECO:0000305" key="3"/>
<comment type="subunit">
    <text evidence="1">Component of the small ribosomal subunit. Mature ribosomes consist of a small (40S) and a large (60S) subunit. The 40S subunit contains about 33 different proteins and 1 molecule of RNA (18S). The 60S subunit contains about 49 different proteins and 3 molecules of RNA (25S, 5.8S and 5S).</text>
</comment>
<comment type="subcellular location">
    <subcellularLocation>
        <location evidence="1">Cytoplasm</location>
    </subcellularLocation>
</comment>
<comment type="similarity">
    <text evidence="1">Belongs to the eukaryotic ribosomal protein eS1 family.</text>
</comment>
<sequence>MAIQPPGSYPQGNKKGKAKKKSGQNAFARKEWYTLRSPSIFPNNINGKTLMTKSAGKNSYMNMIGRRYDVNQADLTGNNDVGHRKFIFKIGDIKGSECVGFFDGMELTSDKHKAMIKKWHTLIEAQKDIVAKDGSVFRVFVMGVTRRHPGYVKKTCYVKHSDEKKIRKIMFDVIEEELSGCDVQKIMKKLANETVGKRIEELGSEIFPLQNCCVRKVKTIKSHQTASVGQQEAIDAITN</sequence>
<organism>
    <name type="scientific">Encephalitozoon cuniculi (strain GB-M1)</name>
    <name type="common">Microsporidian parasite</name>
    <dbReference type="NCBI Taxonomy" id="284813"/>
    <lineage>
        <taxon>Eukaryota</taxon>
        <taxon>Fungi</taxon>
        <taxon>Fungi incertae sedis</taxon>
        <taxon>Microsporidia</taxon>
        <taxon>Unikaryonidae</taxon>
        <taxon>Encephalitozoon</taxon>
    </lineage>
</organism>
<reference key="1">
    <citation type="journal article" date="2001" name="Nature">
        <title>Genome sequence and gene compaction of the eukaryote parasite Encephalitozoon cuniculi.</title>
        <authorList>
            <person name="Katinka M.D."/>
            <person name="Duprat S."/>
            <person name="Cornillot E."/>
            <person name="Metenier G."/>
            <person name="Thomarat F."/>
            <person name="Prensier G."/>
            <person name="Barbe V."/>
            <person name="Peyretaillade E."/>
            <person name="Brottier P."/>
            <person name="Wincker P."/>
            <person name="Delbac F."/>
            <person name="El Alaoui H."/>
            <person name="Peyret P."/>
            <person name="Saurin W."/>
            <person name="Gouy M."/>
            <person name="Weissenbach J."/>
            <person name="Vivares C.P."/>
        </authorList>
    </citation>
    <scope>NUCLEOTIDE SEQUENCE [LARGE SCALE GENOMIC DNA]</scope>
    <source>
        <strain>GB-M1</strain>
    </source>
</reference>
<reference key="2">
    <citation type="journal article" date="2009" name="BMC Genomics">
        <title>Identification of transcriptional signals in Encephalitozoon cuniculi widespread among Microsporidia phylum: support for accurate structural genome annotation.</title>
        <authorList>
            <person name="Peyretaillade E."/>
            <person name="Goncalves O."/>
            <person name="Terrat S."/>
            <person name="Dugat-Bony E."/>
            <person name="Wincker P."/>
            <person name="Cornman R.S."/>
            <person name="Evans J.D."/>
            <person name="Delbac F."/>
            <person name="Peyret P."/>
        </authorList>
    </citation>
    <scope>GENOME REANNOTATION</scope>
    <source>
        <strain>GB-M1</strain>
    </source>
</reference>
<proteinExistence type="evidence at protein level"/>
<keyword id="KW-0002">3D-structure</keyword>
<keyword id="KW-0963">Cytoplasm</keyword>
<keyword id="KW-1185">Reference proteome</keyword>
<keyword id="KW-0687">Ribonucleoprotein</keyword>
<keyword id="KW-0689">Ribosomal protein</keyword>
<protein>
    <recommendedName>
        <fullName evidence="1">Small ribosomal subunit protein eS1</fullName>
    </recommendedName>
    <alternativeName>
        <fullName evidence="3">40S ribosomal protein S1</fullName>
    </alternativeName>
</protein>
<gene>
    <name evidence="1" type="primary">RPS1</name>
    <name type="ordered locus">ECU05_0250</name>
</gene>